<sequence length="369" mass="43117">MKWKLFYFFTLLTFTPAYFFIEQNQWVILASFLVIVNLISLTVHWKFGLLLISCSAALLAYCQLMPEFQLAKLMKANWLRTPFISWLDQHTSGVFNQYLKLFLINETTKNTLYQSAIQLNIVHLFVISGFHLSFLFGVMERWLYKRFYINKITGFVMLLLYLFLVGFAFSALRVFVSKLLRQMFPKQLPENNLGLTALLIILMSPGALHNFGFNFSFLACFVLFAINKVKLWKPLQAVLTSTLILIVVSPITLHLNRKLNALSVFHNLLFTPIALFYFCASWLLLPLIPWMGNSLVGFYWPLPWLSQWALNTTVFLNLPKPNWVFYLVYYGLWGLLYTVGTVFYYDRSLWCRYWVNSPAVKPTAQPSRL</sequence>
<dbReference type="EMBL" id="L38997">
    <property type="protein sequence ID" value="AAA61693.1"/>
    <property type="molecule type" value="Genomic_DNA"/>
</dbReference>
<dbReference type="EMBL" id="U00089">
    <property type="protein sequence ID" value="AAB96038.1"/>
    <property type="molecule type" value="Genomic_DNA"/>
</dbReference>
<dbReference type="PIR" id="S73716">
    <property type="entry name" value="S73716"/>
</dbReference>
<dbReference type="RefSeq" id="NP_110139.1">
    <property type="nucleotide sequence ID" value="NC_000912.1"/>
</dbReference>
<dbReference type="RefSeq" id="WP_010874807.1">
    <property type="nucleotide sequence ID" value="NZ_OU342337.1"/>
</dbReference>
<dbReference type="STRING" id="272634.MPN_451"/>
<dbReference type="EnsemblBacteria" id="AAB96038">
    <property type="protein sequence ID" value="AAB96038"/>
    <property type="gene ID" value="MPN_451"/>
</dbReference>
<dbReference type="KEGG" id="mpn:MPN_451"/>
<dbReference type="PATRIC" id="fig|272634.6.peg.487"/>
<dbReference type="HOGENOM" id="CLU_749679_0_0_14"/>
<dbReference type="OrthoDB" id="396422at2"/>
<dbReference type="BioCyc" id="MPNE272634:G1GJ3-730-MONOMER"/>
<dbReference type="Proteomes" id="UP000000808">
    <property type="component" value="Chromosome"/>
</dbReference>
<dbReference type="GO" id="GO:0005886">
    <property type="term" value="C:plasma membrane"/>
    <property type="evidence" value="ECO:0007669"/>
    <property type="project" value="UniProtKB-SubCell"/>
</dbReference>
<dbReference type="InterPro" id="IPR004477">
    <property type="entry name" value="ComEC_N"/>
</dbReference>
<dbReference type="InterPro" id="IPR052159">
    <property type="entry name" value="Competence_DNA_uptake"/>
</dbReference>
<dbReference type="NCBIfam" id="TIGR00360">
    <property type="entry name" value="ComEC_N-term"/>
    <property type="match status" value="1"/>
</dbReference>
<dbReference type="PANTHER" id="PTHR30619:SF7">
    <property type="entry name" value="BETA-LACTAMASE DOMAIN PROTEIN"/>
    <property type="match status" value="1"/>
</dbReference>
<dbReference type="PANTHER" id="PTHR30619">
    <property type="entry name" value="DNA INTERNALIZATION/COMPETENCE PROTEIN COMEC/REC2"/>
    <property type="match status" value="1"/>
</dbReference>
<dbReference type="Pfam" id="PF03772">
    <property type="entry name" value="Competence"/>
    <property type="match status" value="1"/>
</dbReference>
<feature type="chain" id="PRO_0000210533" description="Uncharacterized protein MG316 homolog">
    <location>
        <begin position="1"/>
        <end position="369"/>
    </location>
</feature>
<feature type="transmembrane region" description="Helical" evidence="1">
    <location>
        <begin position="25"/>
        <end position="45"/>
    </location>
</feature>
<feature type="transmembrane region" description="Helical" evidence="1">
    <location>
        <begin position="47"/>
        <end position="67"/>
    </location>
</feature>
<feature type="transmembrane region" description="Helical" evidence="1">
    <location>
        <begin position="119"/>
        <end position="139"/>
    </location>
</feature>
<feature type="transmembrane region" description="Helical" evidence="1">
    <location>
        <begin position="152"/>
        <end position="172"/>
    </location>
</feature>
<feature type="transmembrane region" description="Helical" evidence="1">
    <location>
        <begin position="206"/>
        <end position="226"/>
    </location>
</feature>
<feature type="transmembrane region" description="Helical" evidence="1">
    <location>
        <begin position="235"/>
        <end position="255"/>
    </location>
</feature>
<feature type="transmembrane region" description="Helical" evidence="1">
    <location>
        <begin position="268"/>
        <end position="288"/>
    </location>
</feature>
<feature type="transmembrane region" description="Helical" evidence="1">
    <location>
        <begin position="295"/>
        <end position="315"/>
    </location>
</feature>
<feature type="transmembrane region" description="Helical" evidence="1">
    <location>
        <begin position="323"/>
        <end position="343"/>
    </location>
</feature>
<proteinExistence type="predicted"/>
<reference key="1">
    <citation type="journal article" date="1996" name="Gene">
        <title>Sequence analysis and characterization of the hmw gene cluster of Mycoplasma pneumoniae.</title>
        <authorList>
            <person name="Dirksen L.B."/>
            <person name="Proft T."/>
            <person name="Hilbert H."/>
            <person name="Plagens H."/>
            <person name="Herrmann R."/>
            <person name="Krause D.C."/>
        </authorList>
    </citation>
    <scope>NUCLEOTIDE SEQUENCE [GENOMIC DNA]</scope>
    <source>
        <strain>ATCC 29342 / M129 / Subtype 1</strain>
    </source>
</reference>
<reference key="2">
    <citation type="journal article" date="1996" name="Nucleic Acids Res.">
        <title>Complete sequence analysis of the genome of the bacterium Mycoplasma pneumoniae.</title>
        <authorList>
            <person name="Himmelreich R."/>
            <person name="Hilbert H."/>
            <person name="Plagens H."/>
            <person name="Pirkl E."/>
            <person name="Li B.-C."/>
            <person name="Herrmann R."/>
        </authorList>
    </citation>
    <scope>NUCLEOTIDE SEQUENCE [LARGE SCALE GENOMIC DNA]</scope>
    <source>
        <strain>ATCC 29342 / M129 / Subtype 1</strain>
    </source>
</reference>
<gene>
    <name type="ordered locus">MPN_451</name>
    <name type="ORF">H08_orf369</name>
    <name type="ORF">MP390</name>
</gene>
<accession>Q50361</accession>
<comment type="subcellular location">
    <subcellularLocation>
        <location evidence="2">Cell membrane</location>
        <topology evidence="2">Multi-pass membrane protein</topology>
    </subcellularLocation>
</comment>
<comment type="similarity">
    <text evidence="2">To B.subtilis ComEC.</text>
</comment>
<keyword id="KW-1003">Cell membrane</keyword>
<keyword id="KW-0472">Membrane</keyword>
<keyword id="KW-1185">Reference proteome</keyword>
<keyword id="KW-0812">Transmembrane</keyword>
<keyword id="KW-1133">Transmembrane helix</keyword>
<organism>
    <name type="scientific">Mycoplasma pneumoniae (strain ATCC 29342 / M129 / Subtype 1)</name>
    <name type="common">Mycoplasmoides pneumoniae</name>
    <dbReference type="NCBI Taxonomy" id="272634"/>
    <lineage>
        <taxon>Bacteria</taxon>
        <taxon>Bacillati</taxon>
        <taxon>Mycoplasmatota</taxon>
        <taxon>Mycoplasmoidales</taxon>
        <taxon>Mycoplasmoidaceae</taxon>
        <taxon>Mycoplasmoides</taxon>
    </lineage>
</organism>
<protein>
    <recommendedName>
        <fullName>Uncharacterized protein MG316 homolog</fullName>
    </recommendedName>
</protein>
<name>Y451_MYCPN</name>
<evidence type="ECO:0000255" key="1"/>
<evidence type="ECO:0000305" key="2"/>